<sequence>MGKYNLILSEYLSFVYNSQSAVQIPIYYSSNSELEKRCIEFHAKCVDSSKKGLSLKPLFEEYKDVIDNATLLSILSYSYDKYNAVERKLVNYAKGKPLEADLTANEIDYENNKITSELFQSAEEYTDSLMDPAILTSLSSNLNAVMFWLERHSNDVADANKIYKRRLDLFTIVASTINKYGVPRHNEKYRYEYEVMKDKPYYLVTWANSSIEMLMSVFSHEDYLIAKELIILSYSNRSTLAKLVSSPMSILVALIDINGTFITNEELELEFSDKYVKAIVPDQIFDELQEMIDNMRKAGLVDIPRMIQEWLVDCSLEKFTLMSKIYSWSFHVGFRKQKMIDAALDQLKTEYTEDVDGEMYNEYTMLIRDEIVKMLEVPVKHDDHLLRDSELAGLLSMSSASNGESRQLKFGRKTIFSTKKNMHVMDDIAHGRYTPGVIPPVNVDRPIPLGRRDVPGRRTRIIFILPYEYFIAQHAVVEKMLSYAKHTREYAEFYSQSNQLLSYGDVTRFLSSNSMVLYTDVSQWDSSQHNTQPFRKGIIMGLDMLSNMTNDPKVVQTLNLYKQTQINLMDSYVQIPDGNVIKKIQYGAVASGEKQTKAANSIANLALIKTVLSRIANKYSFITKIIRVDGDDNYAVLQFNTDVTKQMVQDVSNDVRYIYSRMNAKVKALVSTVGIEIAKRYIAGGKIFFRAGINLLNNEKRGQSTQWDQAAILYSNYIVNKLRGFETDREFILTKIIQMTSVAITGSLRLFPSERVLTTNSTFKVFDSEDFIIEYGTTNDEVYIQRAFMSLSSQKSGIADEIASSQTFKNYVNKLSDQLLISKNVIVSKGIAVTEKAKLNSYAPVYLEKRRAQISALLTMLQKPVSFKSNKITINDILRDIKPFFITSEANLPIQYRKFMPTLPNNVQYVIQCIGSRTYQIEDSGSKSSISKLISKYSVYKPSIEELYKVISLREQEIQLYLVSLGVPPVDAGTYVGSRIYSQDKYKILESYVYNLLSINYGCYQLFNFNSPDLEKLIRIPFKGKIPAVTFILHLYAKLEIINYAIKNGAWISLFCNYPKSEMIKLWKKMWNITALRSPYTSANFFQD</sequence>
<dbReference type="EC" id="2.7.7.48"/>
<dbReference type="EMBL" id="DQ490539">
    <property type="protein sequence ID" value="ABF67546.1"/>
    <property type="molecule type" value="Genomic_RNA"/>
</dbReference>
<dbReference type="EMBL" id="AF044358">
    <property type="protein sequence ID" value="AAF19585.1"/>
    <property type="molecule type" value="Genomic_RNA"/>
</dbReference>
<dbReference type="EMBL" id="AF106300">
    <property type="protein sequence ID" value="AAD47314.1"/>
    <property type="molecule type" value="Genomic_RNA"/>
</dbReference>
<dbReference type="SMR" id="A4ZCW8"/>
<dbReference type="Proteomes" id="UP000006581">
    <property type="component" value="Genome"/>
</dbReference>
<dbReference type="GO" id="GO:0044423">
    <property type="term" value="C:virion component"/>
    <property type="evidence" value="ECO:0007669"/>
    <property type="project" value="UniProtKB-KW"/>
</dbReference>
<dbReference type="GO" id="GO:0000166">
    <property type="term" value="F:nucleotide binding"/>
    <property type="evidence" value="ECO:0007669"/>
    <property type="project" value="UniProtKB-KW"/>
</dbReference>
<dbReference type="GO" id="GO:0003723">
    <property type="term" value="F:RNA binding"/>
    <property type="evidence" value="ECO:0007669"/>
    <property type="project" value="UniProtKB-KW"/>
</dbReference>
<dbReference type="GO" id="GO:0003968">
    <property type="term" value="F:RNA-directed RNA polymerase activity"/>
    <property type="evidence" value="ECO:0007669"/>
    <property type="project" value="UniProtKB-KW"/>
</dbReference>
<dbReference type="GO" id="GO:0006351">
    <property type="term" value="P:DNA-templated transcription"/>
    <property type="evidence" value="ECO:0007669"/>
    <property type="project" value="InterPro"/>
</dbReference>
<dbReference type="GO" id="GO:0019079">
    <property type="term" value="P:viral genome replication"/>
    <property type="evidence" value="ECO:0007669"/>
    <property type="project" value="InterPro"/>
</dbReference>
<dbReference type="Gene3D" id="1.10.357.80">
    <property type="match status" value="2"/>
</dbReference>
<dbReference type="Gene3D" id="1.20.120.1390">
    <property type="match status" value="1"/>
</dbReference>
<dbReference type="Gene3D" id="3.30.230.140">
    <property type="match status" value="2"/>
</dbReference>
<dbReference type="Gene3D" id="3.30.70.2480">
    <property type="match status" value="1"/>
</dbReference>
<dbReference type="Gene3D" id="1.10.10.1990">
    <property type="entry name" value="Viral RNA-directed RNA polymerase, 4-helical domain"/>
    <property type="match status" value="1"/>
</dbReference>
<dbReference type="InterPro" id="IPR043502">
    <property type="entry name" value="DNA/RNA_pol_sf"/>
</dbReference>
<dbReference type="InterPro" id="IPR042032">
    <property type="entry name" value="RNA-dir_pol_4-hel_dom"/>
</dbReference>
<dbReference type="InterPro" id="IPR001795">
    <property type="entry name" value="RNA-dir_pol_luteovirus"/>
</dbReference>
<dbReference type="InterPro" id="IPR007097">
    <property type="entry name" value="RNA-dir_pol_reovirus"/>
</dbReference>
<dbReference type="InterPro" id="IPR022071">
    <property type="entry name" value="Rotavirus_VP1_C"/>
</dbReference>
<dbReference type="Pfam" id="PF02123">
    <property type="entry name" value="RdRP_4"/>
    <property type="match status" value="1"/>
</dbReference>
<dbReference type="Pfam" id="PF12289">
    <property type="entry name" value="Rotavirus_VP1"/>
    <property type="match status" value="1"/>
</dbReference>
<dbReference type="SUPFAM" id="SSF56672">
    <property type="entry name" value="DNA/RNA polymerases"/>
    <property type="match status" value="1"/>
</dbReference>
<dbReference type="PROSITE" id="PS50523">
    <property type="entry name" value="RDRP_DSRNA_REO"/>
    <property type="match status" value="1"/>
</dbReference>
<evidence type="ECO:0000250" key="1"/>
<evidence type="ECO:0000255" key="2">
    <source>
        <dbReference type="PROSITE-ProRule" id="PRU00539"/>
    </source>
</evidence>
<evidence type="ECO:0000305" key="3"/>
<protein>
    <recommendedName>
        <fullName>RNA-directed RNA polymerase</fullName>
        <ecNumber>2.7.7.48</ecNumber>
    </recommendedName>
    <alternativeName>
        <fullName>Protein VP1</fullName>
    </alternativeName>
</protein>
<organism>
    <name type="scientific">Rotavirus A (strain RVA/Human/United States/Wa/1974/G1P1A[8])</name>
    <name type="common">RV-A</name>
    <dbReference type="NCBI Taxonomy" id="10962"/>
    <lineage>
        <taxon>Viruses</taxon>
        <taxon>Riboviria</taxon>
        <taxon>Orthornavirae</taxon>
        <taxon>Duplornaviricota</taxon>
        <taxon>Resentoviricetes</taxon>
        <taxon>Reovirales</taxon>
        <taxon>Sedoreoviridae</taxon>
        <taxon>Rotavirus</taxon>
        <taxon>Rotavirus A</taxon>
    </lineage>
</organism>
<reference key="1">
    <citation type="journal article" date="2008" name="J. Virol.">
        <title>Full genome-based classification of rotaviruses reveals a common origin between human Wa-Like and porcine rotavirus strains and human DS-1-like and bovine rotavirus strains.</title>
        <authorList>
            <person name="Matthijnssens J."/>
            <person name="Ciarlet M."/>
            <person name="Heiman E.M."/>
            <person name="Arijs I."/>
            <person name="Delbeke T."/>
            <person name="McDonald S.M."/>
            <person name="Palombo E.A."/>
            <person name="Iturriza-Gomara M."/>
            <person name="Maes P."/>
            <person name="Patton J.T."/>
            <person name="Rahman M."/>
            <person name="Van Ranst M."/>
        </authorList>
    </citation>
    <scope>NUCLEOTIDE SEQUENCE [GENOMIC RNA]</scope>
</reference>
<reference key="2">
    <citation type="submission" date="1998-01" db="EMBL/GenBank/DDBJ databases">
        <authorList>
            <person name="Lee C.N."/>
            <person name="Zao C.L."/>
        </authorList>
    </citation>
    <scope>NUCLEOTIDE SEQUENCE [GENOMIC RNA] OF 8-178</scope>
</reference>
<reference key="3">
    <citation type="journal article" date="1999" name="J. Gen. Virol.">
        <title>Sequence analysis of VP1 and VP7 genes suggests occurrence of a reassortant of G2 rotavirus responsible for an epidemic of gastroenteritis.</title>
        <authorList>
            <person name="Zao C.L."/>
            <person name="Yu W.N."/>
            <person name="Kao C.L."/>
            <person name="Taniguchi K."/>
            <person name="Lee C.Y."/>
            <person name="Lee C.N."/>
        </authorList>
    </citation>
    <scope>NUCLEOTIDE SEQUENCE [GENOMIC RNA] OF 10-151</scope>
</reference>
<organismHost>
    <name type="scientific">Homo sapiens</name>
    <name type="common">Human</name>
    <dbReference type="NCBI Taxonomy" id="9606"/>
</organismHost>
<keyword id="KW-0460">Magnesium</keyword>
<keyword id="KW-0547">Nucleotide-binding</keyword>
<keyword id="KW-0548">Nucleotidyltransferase</keyword>
<keyword id="KW-0694">RNA-binding</keyword>
<keyword id="KW-0696">RNA-directed RNA polymerase</keyword>
<keyword id="KW-0808">Transferase</keyword>
<keyword id="KW-0693">Viral RNA replication</keyword>
<keyword id="KW-0946">Virion</keyword>
<comment type="function">
    <text evidence="2">RNA-directed RNA polymerase that is involved in both transcription and genome replication. Together with VP3 capping enzyme, forms an enzyme complex positioned near the channels situated at each of the five-fold vertices of the core. Following infection, the outermost layer of the virus is lost, leaving a double-layered particle (DLP) made up of the core and VP6 shell. VP1 then catalyzes the transcription of fully conservative plus-strand genomic RNAs that are extruded through the DLP's channels into the cytoplasm where they function as mRNAs for translation of viral proteins. One copy of each of the viral (+)RNAs is also recruited during core assembly, together with newly synthesized polymerase complexes and VP2. The polymerase of these novo-formed particles catalyzes the synthesis of complementary minus-strands leading to dsRNA formation. To do so, the polymerase specifically recognizes and binds 4 bases 5'-UGUG-3' in the conserved 3'-sequence of plus-strand RNA templates. VP2 presumably activates the autoinhibited VP1-RNA complex to coordinate packaging and genome replication. Once dsRNA synthesis is complete, the polymerase switches to the transcriptional mode, thus providing secondary transcription (By similarity).</text>
</comment>
<comment type="catalytic activity">
    <reaction evidence="2">
        <text>RNA(n) + a ribonucleoside 5'-triphosphate = RNA(n+1) + diphosphate</text>
        <dbReference type="Rhea" id="RHEA:21248"/>
        <dbReference type="Rhea" id="RHEA-COMP:14527"/>
        <dbReference type="Rhea" id="RHEA-COMP:17342"/>
        <dbReference type="ChEBI" id="CHEBI:33019"/>
        <dbReference type="ChEBI" id="CHEBI:61557"/>
        <dbReference type="ChEBI" id="CHEBI:140395"/>
        <dbReference type="EC" id="2.7.7.48"/>
    </reaction>
</comment>
<comment type="cofactor">
    <cofactor evidence="3">
        <name>Mg(2+)</name>
        <dbReference type="ChEBI" id="CHEBI:18420"/>
    </cofactor>
</comment>
<comment type="subunit">
    <text evidence="1 3">Interacts with VP3 (Potential). Interacts with VP2; this interaction activates VP1. Interacts with NSP5; this interaction is probably necessary for the formation of functional virus factories. Interacts with NSP2; this interaction is weak (By similarity).</text>
</comment>
<comment type="subcellular location">
    <subcellularLocation>
        <location evidence="3">Virion</location>
    </subcellularLocation>
    <text evidence="1">Attached inside the inner capsid as a minor component. Also found in spherical cytoplasmic structures, called virus factories, that appear early after infection and are the site of viral replication and packaging (By similarity).</text>
</comment>
<comment type="similarity">
    <text evidence="3">Belongs to the reoviridae RNA-directed RNA polymerase family.</text>
</comment>
<feature type="chain" id="PRO_0000368047" description="RNA-directed RNA polymerase">
    <location>
        <begin position="1"/>
        <end position="1088"/>
    </location>
</feature>
<feature type="domain" description="RdRp catalytic" evidence="2">
    <location>
        <begin position="501"/>
        <end position="687"/>
    </location>
</feature>
<feature type="sequence conflict" description="In Ref. 2; AAF19585." evidence="3" ref="2">
    <original>R</original>
    <variation>G</variation>
    <location>
        <position position="37"/>
    </location>
</feature>
<feature type="sequence conflict" description="In Ref. 3; AAD47314." evidence="3" ref="3">
    <original>N</original>
    <variation>H</variation>
    <location>
        <position position="105"/>
    </location>
</feature>
<proteinExistence type="inferred from homology"/>
<name>RDRP_ROTHW</name>
<accession>A4ZCW8</accession>
<accession>Q9QAU9</accession>
<accession>Q9QS01</accession>